<reference key="1">
    <citation type="journal article" date="2003" name="Nature">
        <title>The genome of a motile marine Synechococcus.</title>
        <authorList>
            <person name="Palenik B."/>
            <person name="Brahamsha B."/>
            <person name="Larimer F.W."/>
            <person name="Land M.L."/>
            <person name="Hauser L."/>
            <person name="Chain P."/>
            <person name="Lamerdin J.E."/>
            <person name="Regala W."/>
            <person name="Allen E.E."/>
            <person name="McCarren J."/>
            <person name="Paulsen I.T."/>
            <person name="Dufresne A."/>
            <person name="Partensky F."/>
            <person name="Webb E.A."/>
            <person name="Waterbury J."/>
        </authorList>
    </citation>
    <scope>NUCLEOTIDE SEQUENCE [LARGE SCALE GENOMIC DNA]</scope>
    <source>
        <strain>WH8102</strain>
    </source>
</reference>
<protein>
    <recommendedName>
        <fullName evidence="1">Small ribosomal subunit protein uS15</fullName>
    </recommendedName>
    <alternativeName>
        <fullName evidence="3">30S ribosomal protein S15</fullName>
    </alternativeName>
</protein>
<proteinExistence type="inferred from homology"/>
<keyword id="KW-0687">Ribonucleoprotein</keyword>
<keyword id="KW-0689">Ribosomal protein</keyword>
<keyword id="KW-0694">RNA-binding</keyword>
<keyword id="KW-0699">rRNA-binding</keyword>
<sequence>MSLDTTEKQQLINTHQTHGTDTGSAEVQVAMLSERISRLSSHLQNNIHDFSSRQGLLKMIGRRKRLLSYMRNKSEQRYTEIIAKLGIRG</sequence>
<organism>
    <name type="scientific">Parasynechococcus marenigrum (strain WH8102)</name>
    <dbReference type="NCBI Taxonomy" id="84588"/>
    <lineage>
        <taxon>Bacteria</taxon>
        <taxon>Bacillati</taxon>
        <taxon>Cyanobacteriota</taxon>
        <taxon>Cyanophyceae</taxon>
        <taxon>Synechococcales</taxon>
        <taxon>Prochlorococcaceae</taxon>
        <taxon>Parasynechococcus</taxon>
        <taxon>Parasynechococcus marenigrum</taxon>
    </lineage>
</organism>
<name>RS15_PARMW</name>
<gene>
    <name evidence="1" type="primary">rpsO</name>
    <name evidence="1" type="synonym">rps15</name>
    <name type="ordered locus">SYNW1034</name>
</gene>
<accession>Q7U7F1</accession>
<comment type="function">
    <text evidence="1">One of the primary rRNA binding proteins, it binds directly to 16S rRNA where it helps nucleate assembly of the platform of the 30S subunit by binding and bridging several RNA helices of the 16S rRNA.</text>
</comment>
<comment type="function">
    <text evidence="1">Forms an intersubunit bridge (bridge B4) with the 23S rRNA of the 50S subunit in the ribosome.</text>
</comment>
<comment type="subunit">
    <text evidence="1">Part of the 30S ribosomal subunit. Forms a bridge to the 50S subunit in the 70S ribosome, contacting the 23S rRNA.</text>
</comment>
<comment type="similarity">
    <text evidence="1">Belongs to the universal ribosomal protein uS15 family.</text>
</comment>
<dbReference type="EMBL" id="BX569691">
    <property type="protein sequence ID" value="CAE07549.1"/>
    <property type="molecule type" value="Genomic_DNA"/>
</dbReference>
<dbReference type="RefSeq" id="WP_011127899.1">
    <property type="nucleotide sequence ID" value="NC_005070.1"/>
</dbReference>
<dbReference type="SMR" id="Q7U7F1"/>
<dbReference type="STRING" id="84588.SYNW1034"/>
<dbReference type="KEGG" id="syw:SYNW1034"/>
<dbReference type="eggNOG" id="COG0184">
    <property type="taxonomic scope" value="Bacteria"/>
</dbReference>
<dbReference type="HOGENOM" id="CLU_148518_0_0_3"/>
<dbReference type="Proteomes" id="UP000001422">
    <property type="component" value="Chromosome"/>
</dbReference>
<dbReference type="GO" id="GO:0022627">
    <property type="term" value="C:cytosolic small ribosomal subunit"/>
    <property type="evidence" value="ECO:0007669"/>
    <property type="project" value="TreeGrafter"/>
</dbReference>
<dbReference type="GO" id="GO:0019843">
    <property type="term" value="F:rRNA binding"/>
    <property type="evidence" value="ECO:0007669"/>
    <property type="project" value="UniProtKB-UniRule"/>
</dbReference>
<dbReference type="GO" id="GO:0003735">
    <property type="term" value="F:structural constituent of ribosome"/>
    <property type="evidence" value="ECO:0007669"/>
    <property type="project" value="InterPro"/>
</dbReference>
<dbReference type="GO" id="GO:0006412">
    <property type="term" value="P:translation"/>
    <property type="evidence" value="ECO:0007669"/>
    <property type="project" value="UniProtKB-UniRule"/>
</dbReference>
<dbReference type="CDD" id="cd00353">
    <property type="entry name" value="Ribosomal_S15p_S13e"/>
    <property type="match status" value="1"/>
</dbReference>
<dbReference type="FunFam" id="1.10.287.10:FF:000002">
    <property type="entry name" value="30S ribosomal protein S15"/>
    <property type="match status" value="1"/>
</dbReference>
<dbReference type="Gene3D" id="6.10.250.3130">
    <property type="match status" value="1"/>
</dbReference>
<dbReference type="Gene3D" id="1.10.287.10">
    <property type="entry name" value="S15/NS1, RNA-binding"/>
    <property type="match status" value="1"/>
</dbReference>
<dbReference type="HAMAP" id="MF_01343_B">
    <property type="entry name" value="Ribosomal_uS15_B"/>
    <property type="match status" value="1"/>
</dbReference>
<dbReference type="InterPro" id="IPR000589">
    <property type="entry name" value="Ribosomal_uS15"/>
</dbReference>
<dbReference type="InterPro" id="IPR005290">
    <property type="entry name" value="Ribosomal_uS15_bac-type"/>
</dbReference>
<dbReference type="InterPro" id="IPR009068">
    <property type="entry name" value="uS15_NS1_RNA-bd_sf"/>
</dbReference>
<dbReference type="NCBIfam" id="TIGR00952">
    <property type="entry name" value="S15_bact"/>
    <property type="match status" value="1"/>
</dbReference>
<dbReference type="PANTHER" id="PTHR23321">
    <property type="entry name" value="RIBOSOMAL PROTEIN S15, BACTERIAL AND ORGANELLAR"/>
    <property type="match status" value="1"/>
</dbReference>
<dbReference type="PANTHER" id="PTHR23321:SF26">
    <property type="entry name" value="SMALL RIBOSOMAL SUBUNIT PROTEIN US15M"/>
    <property type="match status" value="1"/>
</dbReference>
<dbReference type="Pfam" id="PF00312">
    <property type="entry name" value="Ribosomal_S15"/>
    <property type="match status" value="1"/>
</dbReference>
<dbReference type="SMART" id="SM01387">
    <property type="entry name" value="Ribosomal_S15"/>
    <property type="match status" value="1"/>
</dbReference>
<dbReference type="SUPFAM" id="SSF47060">
    <property type="entry name" value="S15/NS1 RNA-binding domain"/>
    <property type="match status" value="1"/>
</dbReference>
<dbReference type="PROSITE" id="PS00362">
    <property type="entry name" value="RIBOSOMAL_S15"/>
    <property type="match status" value="1"/>
</dbReference>
<evidence type="ECO:0000255" key="1">
    <source>
        <dbReference type="HAMAP-Rule" id="MF_01343"/>
    </source>
</evidence>
<evidence type="ECO:0000256" key="2">
    <source>
        <dbReference type="SAM" id="MobiDB-lite"/>
    </source>
</evidence>
<evidence type="ECO:0000305" key="3"/>
<feature type="chain" id="PRO_0000115567" description="Small ribosomal subunit protein uS15">
    <location>
        <begin position="1"/>
        <end position="89"/>
    </location>
</feature>
<feature type="region of interest" description="Disordered" evidence="2">
    <location>
        <begin position="1"/>
        <end position="25"/>
    </location>
</feature>
<feature type="compositionally biased region" description="Polar residues" evidence="2">
    <location>
        <begin position="8"/>
        <end position="25"/>
    </location>
</feature>